<protein>
    <recommendedName>
        <fullName>Uncharacterized protein YpjK</fullName>
    </recommendedName>
</protein>
<accession>P52134</accession>
<accession>Q2MAD6</accession>
<name>YPJK_ECOLI</name>
<dbReference type="EMBL" id="U36840">
    <property type="protein sequence ID" value="AAA79804.1"/>
    <property type="status" value="ALT_SEQ"/>
    <property type="molecule type" value="Genomic_DNA"/>
</dbReference>
<dbReference type="EMBL" id="U00096">
    <property type="protein sequence ID" value="AAC75683.2"/>
    <property type="molecule type" value="Genomic_DNA"/>
</dbReference>
<dbReference type="EMBL" id="AP009048">
    <property type="protein sequence ID" value="BAE76770.1"/>
    <property type="molecule type" value="Genomic_DNA"/>
</dbReference>
<dbReference type="PIR" id="E65042">
    <property type="entry name" value="E65042"/>
</dbReference>
<dbReference type="RefSeq" id="WP_001144029.1">
    <property type="nucleotide sequence ID" value="NZ_LN832404.1"/>
</dbReference>
<dbReference type="RefSeq" id="YP_026174.2">
    <property type="nucleotide sequence ID" value="NC_000913.3"/>
</dbReference>
<dbReference type="BioGRID" id="4260627">
    <property type="interactions" value="11"/>
</dbReference>
<dbReference type="FunCoup" id="P52134">
    <property type="interactions" value="287"/>
</dbReference>
<dbReference type="STRING" id="511145.b2635"/>
<dbReference type="PaxDb" id="511145-b2635"/>
<dbReference type="EnsemblBacteria" id="AAC75683">
    <property type="protein sequence ID" value="AAC75683"/>
    <property type="gene ID" value="b2635"/>
</dbReference>
<dbReference type="GeneID" id="2847710"/>
<dbReference type="KEGG" id="ecj:JW5888"/>
<dbReference type="KEGG" id="eco:b2635"/>
<dbReference type="KEGG" id="ecoc:C3026_14575"/>
<dbReference type="PATRIC" id="fig|511145.12.peg.2729"/>
<dbReference type="EchoBASE" id="EB4122"/>
<dbReference type="eggNOG" id="ENOG5032V17">
    <property type="taxonomic scope" value="Bacteria"/>
</dbReference>
<dbReference type="HOGENOM" id="CLU_2567675_0_0_6"/>
<dbReference type="InParanoid" id="P52134"/>
<dbReference type="BioCyc" id="EcoCyc:G7370-MONOMER"/>
<dbReference type="PRO" id="PR:P52134"/>
<dbReference type="Proteomes" id="UP000000625">
    <property type="component" value="Chromosome"/>
</dbReference>
<keyword id="KW-1185">Reference proteome</keyword>
<keyword id="KW-0732">Signal</keyword>
<sequence>MPVIAIIAIVIIVIILNKTGVSDSLTALTLATVAALLTGGGAAGAASVALTPFVGVPVGIFVGIYVFAKVVRLISGKK</sequence>
<organism>
    <name type="scientific">Escherichia coli (strain K12)</name>
    <dbReference type="NCBI Taxonomy" id="83333"/>
    <lineage>
        <taxon>Bacteria</taxon>
        <taxon>Pseudomonadati</taxon>
        <taxon>Pseudomonadota</taxon>
        <taxon>Gammaproteobacteria</taxon>
        <taxon>Enterobacterales</taxon>
        <taxon>Enterobacteriaceae</taxon>
        <taxon>Escherichia</taxon>
    </lineage>
</organism>
<feature type="signal peptide" evidence="1">
    <location>
        <begin position="1"/>
        <end position="45"/>
    </location>
</feature>
<feature type="chain" id="PRO_0000013895" description="Uncharacterized protein YpjK">
    <location>
        <begin position="46"/>
        <end position="78"/>
    </location>
</feature>
<gene>
    <name type="primary">ypjK</name>
    <name type="ordered locus">b2635</name>
    <name type="ordered locus">JW5888</name>
</gene>
<evidence type="ECO:0000255" key="1"/>
<evidence type="ECO:0000305" key="2"/>
<reference key="1">
    <citation type="journal article" date="1997" name="Science">
        <title>The complete genome sequence of Escherichia coli K-12.</title>
        <authorList>
            <person name="Blattner F.R."/>
            <person name="Plunkett G. III"/>
            <person name="Bloch C.A."/>
            <person name="Perna N.T."/>
            <person name="Burland V."/>
            <person name="Riley M."/>
            <person name="Collado-Vides J."/>
            <person name="Glasner J.D."/>
            <person name="Rode C.K."/>
            <person name="Mayhew G.F."/>
            <person name="Gregor J."/>
            <person name="Davis N.W."/>
            <person name="Kirkpatrick H.A."/>
            <person name="Goeden M.A."/>
            <person name="Rose D.J."/>
            <person name="Mau B."/>
            <person name="Shao Y."/>
        </authorList>
    </citation>
    <scope>NUCLEOTIDE SEQUENCE [LARGE SCALE GENOMIC DNA]</scope>
    <source>
        <strain>K12 / MG1655 / ATCC 47076</strain>
    </source>
</reference>
<reference key="2">
    <citation type="journal article" date="2006" name="Mol. Syst. Biol.">
        <title>Highly accurate genome sequences of Escherichia coli K-12 strains MG1655 and W3110.</title>
        <authorList>
            <person name="Hayashi K."/>
            <person name="Morooka N."/>
            <person name="Yamamoto Y."/>
            <person name="Fujita K."/>
            <person name="Isono K."/>
            <person name="Choi S."/>
            <person name="Ohtsubo E."/>
            <person name="Baba T."/>
            <person name="Wanner B.L."/>
            <person name="Mori H."/>
            <person name="Horiuchi T."/>
        </authorList>
    </citation>
    <scope>NUCLEOTIDE SEQUENCE [LARGE SCALE GENOMIC DNA]</scope>
    <source>
        <strain>K12 / W3110 / ATCC 27325 / DSM 5911</strain>
    </source>
</reference>
<comment type="similarity">
    <text evidence="2">To E.coli YkfL.</text>
</comment>
<comment type="sequence caution" evidence="2">
    <conflict type="erroneous initiation">
        <sequence resource="EMBL-CDS" id="AAA79804"/>
    </conflict>
    <text>Truncated N-terminus.</text>
</comment>
<comment type="sequence caution" evidence="2">
    <conflict type="frameshift">
        <sequence resource="EMBL-CDS" id="AAA79804"/>
    </conflict>
</comment>
<proteinExistence type="inferred from homology"/>